<reference key="1">
    <citation type="journal article" date="2007" name="BMC Dev. Biol.">
        <title>Differential regulation of abundance and deadenylation of maternal transcripts during bovine oocyte maturation in vitro and in vivo.</title>
        <authorList>
            <person name="Thelie A."/>
            <person name="Papillier P."/>
            <person name="Pennetier S."/>
            <person name="Perreau C."/>
            <person name="Traverso J.M."/>
            <person name="Uzbekova S."/>
            <person name="Mermillod P."/>
            <person name="Joly C."/>
            <person name="Humblot P."/>
            <person name="Dalbies-Tran R."/>
        </authorList>
    </citation>
    <scope>NUCLEOTIDE SEQUENCE [MRNA]</scope>
    <scope>TISSUE SPECIFICITY</scope>
</reference>
<reference key="2">
    <citation type="journal article" date="2009" name="Genome Biol.">
        <title>A whole-genome assembly of the domestic cow, Bos taurus.</title>
        <authorList>
            <person name="Zimin A.V."/>
            <person name="Delcher A.L."/>
            <person name="Florea L."/>
            <person name="Kelley D.R."/>
            <person name="Schatz M.C."/>
            <person name="Puiu D."/>
            <person name="Hanrahan F."/>
            <person name="Pertea G."/>
            <person name="Van Tassell C.P."/>
            <person name="Sonstegard T.S."/>
            <person name="Marcais G."/>
            <person name="Roberts M."/>
            <person name="Subramanian P."/>
            <person name="Yorke J.A."/>
            <person name="Salzberg S.L."/>
        </authorList>
    </citation>
    <scope>NUCLEOTIDE SEQUENCE [LARGE SCALE GENOMIC DNA]</scope>
    <source>
        <strain>Hereford</strain>
    </source>
</reference>
<sequence>MDSSEDNPTWTLESLKTSIDDASQAMQVATQLSEMLATNLSNLTLNPSIKLPYLPEYPSQLTGQLPSEKTPHRRRGVRTVLSERRYRMQKLIESLRLRYAKGIPRSDSQRQLQQQEDTEIRSRVRRFQCTCSYCQFKRNPSDDNYENYYNTTYSNYAMESNES</sequence>
<organism>
    <name type="scientific">Bos taurus</name>
    <name type="common">Bovine</name>
    <dbReference type="NCBI Taxonomy" id="9913"/>
    <lineage>
        <taxon>Eukaryota</taxon>
        <taxon>Metazoa</taxon>
        <taxon>Chordata</taxon>
        <taxon>Craniata</taxon>
        <taxon>Vertebrata</taxon>
        <taxon>Euteleostomi</taxon>
        <taxon>Mammalia</taxon>
        <taxon>Eutheria</taxon>
        <taxon>Laurasiatheria</taxon>
        <taxon>Artiodactyla</taxon>
        <taxon>Ruminantia</taxon>
        <taxon>Pecora</taxon>
        <taxon>Bovidae</taxon>
        <taxon>Bovinae</taxon>
        <taxon>Bos</taxon>
    </lineage>
</organism>
<feature type="chain" id="PRO_0000419973" description="Developmental pluripotency-associated protein 3">
    <location>
        <begin position="1"/>
        <end position="163"/>
    </location>
</feature>
<feature type="sequence conflict" description="In Ref. 1; ABR15009." evidence="3" ref="1">
    <original>P</original>
    <variation>T</variation>
    <location>
        <position position="58"/>
    </location>
</feature>
<keyword id="KW-0156">Chromatin regulator</keyword>
<keyword id="KW-0963">Cytoplasm</keyword>
<keyword id="KW-0217">Developmental protein</keyword>
<keyword id="KW-0539">Nucleus</keyword>
<keyword id="KW-1185">Reference proteome</keyword>
<dbReference type="EMBL" id="EF446904">
    <property type="protein sequence ID" value="ABR15008.1"/>
    <property type="molecule type" value="mRNA"/>
</dbReference>
<dbReference type="EMBL" id="EF446905">
    <property type="protein sequence ID" value="ABR15009.1"/>
    <property type="molecule type" value="mRNA"/>
</dbReference>
<dbReference type="EMBL" id="DAAA02014397">
    <property type="status" value="NOT_ANNOTATED_CDS"/>
    <property type="molecule type" value="Genomic_DNA"/>
</dbReference>
<dbReference type="RefSeq" id="NP_001104578.1">
    <property type="nucleotide sequence ID" value="NM_001111108.2"/>
</dbReference>
<dbReference type="RefSeq" id="NP_001104579.1">
    <property type="nucleotide sequence ID" value="NM_001111109.2"/>
</dbReference>
<dbReference type="STRING" id="9913.ENSBTAP00000054536"/>
<dbReference type="PaxDb" id="9913-ENSBTAP00000054822"/>
<dbReference type="GeneID" id="616433"/>
<dbReference type="KEGG" id="bta:616433"/>
<dbReference type="CTD" id="359787"/>
<dbReference type="VEuPathDB" id="HostDB:ENSBTAG00000046609"/>
<dbReference type="eggNOG" id="ENOG502TDBW">
    <property type="taxonomic scope" value="Eukaryota"/>
</dbReference>
<dbReference type="HOGENOM" id="CLU_107188_0_0_1"/>
<dbReference type="InParanoid" id="A9Q1J7"/>
<dbReference type="OMA" id="RFRCSCH"/>
<dbReference type="OrthoDB" id="9529981at2759"/>
<dbReference type="Proteomes" id="UP000009136">
    <property type="component" value="Chromosome 5"/>
</dbReference>
<dbReference type="Bgee" id="ENSBTAG00000046609">
    <property type="expression patterns" value="Expressed in oocyte and 18 other cell types or tissues"/>
</dbReference>
<dbReference type="GO" id="GO:0005737">
    <property type="term" value="C:cytoplasm"/>
    <property type="evidence" value="ECO:0007669"/>
    <property type="project" value="UniProtKB-SubCell"/>
</dbReference>
<dbReference type="GO" id="GO:0005634">
    <property type="term" value="C:nucleus"/>
    <property type="evidence" value="ECO:0000318"/>
    <property type="project" value="GO_Central"/>
</dbReference>
<dbReference type="GO" id="GO:0035064">
    <property type="term" value="F:methylated histone binding"/>
    <property type="evidence" value="ECO:0000318"/>
    <property type="project" value="GO_Central"/>
</dbReference>
<dbReference type="GO" id="GO:0044726">
    <property type="term" value="P:epigenetic programing of female pronucleus"/>
    <property type="evidence" value="ECO:0000318"/>
    <property type="project" value="GO_Central"/>
</dbReference>
<dbReference type="InterPro" id="IPR029096">
    <property type="entry name" value="Dppa3"/>
</dbReference>
<dbReference type="PANTHER" id="PTHR31577:SF2">
    <property type="entry name" value="DEVELOPMENTAL PLURIPOTENCY-ASSOCIATED PROTEIN 3"/>
    <property type="match status" value="1"/>
</dbReference>
<dbReference type="PANTHER" id="PTHR31577">
    <property type="entry name" value="DEVELOPMENTAL PLURIPOTENCY-ASSOCIATED PROTEIN 3-RELATED"/>
    <property type="match status" value="1"/>
</dbReference>
<dbReference type="Pfam" id="PF15549">
    <property type="entry name" value="PGC7_Stella"/>
    <property type="match status" value="1"/>
</dbReference>
<gene>
    <name type="primary">DPPA3</name>
    <name type="synonym">STELLA</name>
    <name type="synonym">STELLAR</name>
</gene>
<proteinExistence type="evidence at transcript level"/>
<evidence type="ECO:0000250" key="1">
    <source>
        <dbReference type="UniProtKB" id="Q8QZY3"/>
    </source>
</evidence>
<evidence type="ECO:0000269" key="2">
    <source>
    </source>
</evidence>
<evidence type="ECO:0000305" key="3"/>
<name>DPPA3_BOVIN</name>
<accession>A9Q1J7</accession>
<accession>A9Q1J8</accession>
<comment type="function">
    <text evidence="1">Primordial germ cell (PGCs)-specific protein involved in epigenetic chromatin reprogramming in the zygote following fertilization. In zygotes, DNA demethylation occurs selectively in the paternal pronucleus before the first cell division, while the adjacent maternal pronucleus and certain paternally-imprinted loci are protected from this process. Participates in protection of DNA methylation in the maternal pronucleus by preventing conversion of 5mC to 5hmC: specifically recognizes and binds histone H3 dimethylated at 'Lys-9' (H3K9me2) on maternal genome, and protects maternal genome from TET3-mediated conversion to 5hmC and subsequent DNA demethylation. Does not bind paternal chromatin, which is mainly packed into protamine and does not contain much H3K9me2 mark. Also protects imprinted loci that are marked with H3K9me2 in mature sperm from DNA demethylation in early embryogenesis. May be important for the totipotent/pluripotent states continuing through preimplantation development. Also involved in chromatin condensation in oocytogenesis.</text>
</comment>
<comment type="subcellular location">
    <subcellularLocation>
        <location evidence="1">Nucleus</location>
    </subcellularLocation>
    <subcellularLocation>
        <location evidence="1">Cytoplasm</location>
    </subcellularLocation>
    <text evidence="1">Mainly localizes in the female pronucleus, localization to the male pronucleus in much weaker (By similarity). Expressed during blastocyst, morula and 4-cell embryo stages.</text>
</comment>
<comment type="tissue specificity">
    <text evidence="2">Preferentially expressed in oocyte.</text>
</comment>
<comment type="domain">
    <text evidence="1">Mediates binding to H3K9me2 via N-terminal region, while ability to exclude TET3 from the maternal pronucleus requires the C-terminal part.</text>
</comment>
<protein>
    <recommendedName>
        <fullName>Developmental pluripotency-associated protein 3</fullName>
    </recommendedName>
    <alternativeName>
        <fullName>Stella-related protein</fullName>
    </alternativeName>
</protein>